<sequence>MIRIGHGFDVHKFGGVGPLTIGGEKIDYPQGFLAHSDGDVAIHALCDAILGALAMGDIGKHFPDTASEYENIDSRILLRHVVSLAKEQGYVLGNGDVTIVAQAPKMLPHIQAMRSNLASDLNCELSQINVKATTTEKLGFEGRKEGISSHAVVIMNKESMSKTNA</sequence>
<dbReference type="EC" id="4.6.1.12" evidence="1"/>
<dbReference type="EMBL" id="CR954246">
    <property type="protein sequence ID" value="CAI85769.1"/>
    <property type="molecule type" value="Genomic_DNA"/>
</dbReference>
<dbReference type="SMR" id="Q3IDQ5"/>
<dbReference type="STRING" id="326442.PSHAa0685"/>
<dbReference type="KEGG" id="pha:PSHAa0685"/>
<dbReference type="eggNOG" id="COG0245">
    <property type="taxonomic scope" value="Bacteria"/>
</dbReference>
<dbReference type="HOGENOM" id="CLU_084630_2_0_6"/>
<dbReference type="BioCyc" id="PHAL326442:PSHA_RS03350-MONOMER"/>
<dbReference type="UniPathway" id="UPA00056">
    <property type="reaction ID" value="UER00095"/>
</dbReference>
<dbReference type="Proteomes" id="UP000006843">
    <property type="component" value="Chromosome I"/>
</dbReference>
<dbReference type="GO" id="GO:0008685">
    <property type="term" value="F:2-C-methyl-D-erythritol 2,4-cyclodiphosphate synthase activity"/>
    <property type="evidence" value="ECO:0007669"/>
    <property type="project" value="UniProtKB-UniRule"/>
</dbReference>
<dbReference type="GO" id="GO:0046872">
    <property type="term" value="F:metal ion binding"/>
    <property type="evidence" value="ECO:0007669"/>
    <property type="project" value="UniProtKB-KW"/>
</dbReference>
<dbReference type="GO" id="GO:0019288">
    <property type="term" value="P:isopentenyl diphosphate biosynthetic process, methylerythritol 4-phosphate pathway"/>
    <property type="evidence" value="ECO:0007669"/>
    <property type="project" value="UniProtKB-UniRule"/>
</dbReference>
<dbReference type="GO" id="GO:0016114">
    <property type="term" value="P:terpenoid biosynthetic process"/>
    <property type="evidence" value="ECO:0007669"/>
    <property type="project" value="InterPro"/>
</dbReference>
<dbReference type="CDD" id="cd00554">
    <property type="entry name" value="MECDP_synthase"/>
    <property type="match status" value="1"/>
</dbReference>
<dbReference type="FunFam" id="3.30.1330.50:FF:000001">
    <property type="entry name" value="2-C-methyl-D-erythritol 2,4-cyclodiphosphate synthase"/>
    <property type="match status" value="1"/>
</dbReference>
<dbReference type="Gene3D" id="3.30.1330.50">
    <property type="entry name" value="2-C-methyl-D-erythritol 2,4-cyclodiphosphate synthase"/>
    <property type="match status" value="1"/>
</dbReference>
<dbReference type="HAMAP" id="MF_00107">
    <property type="entry name" value="IspF"/>
    <property type="match status" value="1"/>
</dbReference>
<dbReference type="InterPro" id="IPR003526">
    <property type="entry name" value="MECDP_synthase"/>
</dbReference>
<dbReference type="InterPro" id="IPR020555">
    <property type="entry name" value="MECDP_synthase_CS"/>
</dbReference>
<dbReference type="InterPro" id="IPR036571">
    <property type="entry name" value="MECDP_synthase_sf"/>
</dbReference>
<dbReference type="NCBIfam" id="TIGR00151">
    <property type="entry name" value="ispF"/>
    <property type="match status" value="1"/>
</dbReference>
<dbReference type="PANTHER" id="PTHR43181">
    <property type="entry name" value="2-C-METHYL-D-ERYTHRITOL 2,4-CYCLODIPHOSPHATE SYNTHASE, CHLOROPLASTIC"/>
    <property type="match status" value="1"/>
</dbReference>
<dbReference type="PANTHER" id="PTHR43181:SF1">
    <property type="entry name" value="2-C-METHYL-D-ERYTHRITOL 2,4-CYCLODIPHOSPHATE SYNTHASE, CHLOROPLASTIC"/>
    <property type="match status" value="1"/>
</dbReference>
<dbReference type="Pfam" id="PF02542">
    <property type="entry name" value="YgbB"/>
    <property type="match status" value="1"/>
</dbReference>
<dbReference type="SUPFAM" id="SSF69765">
    <property type="entry name" value="IpsF-like"/>
    <property type="match status" value="1"/>
</dbReference>
<dbReference type="PROSITE" id="PS01350">
    <property type="entry name" value="ISPF"/>
    <property type="match status" value="1"/>
</dbReference>
<keyword id="KW-0414">Isoprene biosynthesis</keyword>
<keyword id="KW-0456">Lyase</keyword>
<keyword id="KW-0479">Metal-binding</keyword>
<keyword id="KW-1185">Reference proteome</keyword>
<gene>
    <name evidence="1" type="primary">ispF</name>
    <name type="ordered locus">PSHAa0685</name>
</gene>
<name>ISPF_PSET1</name>
<accession>Q3IDQ5</accession>
<feature type="chain" id="PRO_0000237741" description="2-C-methyl-D-erythritol 2,4-cyclodiphosphate synthase">
    <location>
        <begin position="1"/>
        <end position="165"/>
    </location>
</feature>
<feature type="binding site" evidence="1">
    <location>
        <begin position="9"/>
        <end position="11"/>
    </location>
    <ligand>
        <name>4-CDP-2-C-methyl-D-erythritol 2-phosphate</name>
        <dbReference type="ChEBI" id="CHEBI:57919"/>
    </ligand>
</feature>
<feature type="binding site" evidence="1">
    <location>
        <position position="9"/>
    </location>
    <ligand>
        <name>a divalent metal cation</name>
        <dbReference type="ChEBI" id="CHEBI:60240"/>
    </ligand>
</feature>
<feature type="binding site" evidence="1">
    <location>
        <position position="11"/>
    </location>
    <ligand>
        <name>a divalent metal cation</name>
        <dbReference type="ChEBI" id="CHEBI:60240"/>
    </ligand>
</feature>
<feature type="binding site" evidence="1">
    <location>
        <begin position="35"/>
        <end position="36"/>
    </location>
    <ligand>
        <name>4-CDP-2-C-methyl-D-erythritol 2-phosphate</name>
        <dbReference type="ChEBI" id="CHEBI:57919"/>
    </ligand>
</feature>
<feature type="binding site" evidence="1">
    <location>
        <position position="43"/>
    </location>
    <ligand>
        <name>a divalent metal cation</name>
        <dbReference type="ChEBI" id="CHEBI:60240"/>
    </ligand>
</feature>
<feature type="binding site" evidence="1">
    <location>
        <begin position="57"/>
        <end position="59"/>
    </location>
    <ligand>
        <name>4-CDP-2-C-methyl-D-erythritol 2-phosphate</name>
        <dbReference type="ChEBI" id="CHEBI:57919"/>
    </ligand>
</feature>
<feature type="binding site" evidence="1">
    <location>
        <begin position="101"/>
        <end position="107"/>
    </location>
    <ligand>
        <name>4-CDP-2-C-methyl-D-erythritol 2-phosphate</name>
        <dbReference type="ChEBI" id="CHEBI:57919"/>
    </ligand>
</feature>
<feature type="binding site" evidence="1">
    <location>
        <begin position="133"/>
        <end position="136"/>
    </location>
    <ligand>
        <name>4-CDP-2-C-methyl-D-erythritol 2-phosphate</name>
        <dbReference type="ChEBI" id="CHEBI:57919"/>
    </ligand>
</feature>
<feature type="binding site" evidence="1">
    <location>
        <position position="140"/>
    </location>
    <ligand>
        <name>4-CDP-2-C-methyl-D-erythritol 2-phosphate</name>
        <dbReference type="ChEBI" id="CHEBI:57919"/>
    </ligand>
</feature>
<feature type="binding site" evidence="1">
    <location>
        <position position="143"/>
    </location>
    <ligand>
        <name>4-CDP-2-C-methyl-D-erythritol 2-phosphate</name>
        <dbReference type="ChEBI" id="CHEBI:57919"/>
    </ligand>
</feature>
<feature type="site" description="Transition state stabilizer" evidence="1">
    <location>
        <position position="35"/>
    </location>
</feature>
<feature type="site" description="Transition state stabilizer" evidence="1">
    <location>
        <position position="134"/>
    </location>
</feature>
<proteinExistence type="inferred from homology"/>
<evidence type="ECO:0000255" key="1">
    <source>
        <dbReference type="HAMAP-Rule" id="MF_00107"/>
    </source>
</evidence>
<reference key="1">
    <citation type="journal article" date="2005" name="Genome Res.">
        <title>Coping with cold: the genome of the versatile marine Antarctica bacterium Pseudoalteromonas haloplanktis TAC125.</title>
        <authorList>
            <person name="Medigue C."/>
            <person name="Krin E."/>
            <person name="Pascal G."/>
            <person name="Barbe V."/>
            <person name="Bernsel A."/>
            <person name="Bertin P.N."/>
            <person name="Cheung F."/>
            <person name="Cruveiller S."/>
            <person name="D'Amico S."/>
            <person name="Duilio A."/>
            <person name="Fang G."/>
            <person name="Feller G."/>
            <person name="Ho C."/>
            <person name="Mangenot S."/>
            <person name="Marino G."/>
            <person name="Nilsson J."/>
            <person name="Parrilli E."/>
            <person name="Rocha E.P.C."/>
            <person name="Rouy Z."/>
            <person name="Sekowska A."/>
            <person name="Tutino M.L."/>
            <person name="Vallenet D."/>
            <person name="von Heijne G."/>
            <person name="Danchin A."/>
        </authorList>
    </citation>
    <scope>NUCLEOTIDE SEQUENCE [LARGE SCALE GENOMIC DNA]</scope>
    <source>
        <strain>TAC 125</strain>
    </source>
</reference>
<comment type="function">
    <text evidence="1">Involved in the biosynthesis of isopentenyl diphosphate (IPP) and dimethylallyl diphosphate (DMAPP), two major building blocks of isoprenoid compounds. Catalyzes the conversion of 4-diphosphocytidyl-2-C-methyl-D-erythritol 2-phosphate (CDP-ME2P) to 2-C-methyl-D-erythritol 2,4-cyclodiphosphate (ME-CPP) with a corresponding release of cytidine 5-monophosphate (CMP).</text>
</comment>
<comment type="catalytic activity">
    <reaction evidence="1">
        <text>4-CDP-2-C-methyl-D-erythritol 2-phosphate = 2-C-methyl-D-erythritol 2,4-cyclic diphosphate + CMP</text>
        <dbReference type="Rhea" id="RHEA:23864"/>
        <dbReference type="ChEBI" id="CHEBI:57919"/>
        <dbReference type="ChEBI" id="CHEBI:58483"/>
        <dbReference type="ChEBI" id="CHEBI:60377"/>
        <dbReference type="EC" id="4.6.1.12"/>
    </reaction>
</comment>
<comment type="cofactor">
    <cofactor evidence="1">
        <name>a divalent metal cation</name>
        <dbReference type="ChEBI" id="CHEBI:60240"/>
    </cofactor>
    <text evidence="1">Binds 1 divalent metal cation per subunit.</text>
</comment>
<comment type="pathway">
    <text evidence="1">Isoprenoid biosynthesis; isopentenyl diphosphate biosynthesis via DXP pathway; isopentenyl diphosphate from 1-deoxy-D-xylulose 5-phosphate: step 4/6.</text>
</comment>
<comment type="subunit">
    <text evidence="1">Homotrimer.</text>
</comment>
<comment type="similarity">
    <text evidence="1">Belongs to the IspF family.</text>
</comment>
<protein>
    <recommendedName>
        <fullName evidence="1">2-C-methyl-D-erythritol 2,4-cyclodiphosphate synthase</fullName>
        <shortName evidence="1">MECDP-synthase</shortName>
        <shortName evidence="1">MECPP-synthase</shortName>
        <shortName evidence="1">MECPS</shortName>
        <ecNumber evidence="1">4.6.1.12</ecNumber>
    </recommendedName>
</protein>
<organism>
    <name type="scientific">Pseudoalteromonas translucida (strain TAC 125)</name>
    <dbReference type="NCBI Taxonomy" id="326442"/>
    <lineage>
        <taxon>Bacteria</taxon>
        <taxon>Pseudomonadati</taxon>
        <taxon>Pseudomonadota</taxon>
        <taxon>Gammaproteobacteria</taxon>
        <taxon>Alteromonadales</taxon>
        <taxon>Pseudoalteromonadaceae</taxon>
        <taxon>Pseudoalteromonas</taxon>
    </lineage>
</organism>